<evidence type="ECO:0000255" key="1">
    <source>
        <dbReference type="HAMAP-Rule" id="MF_00038"/>
    </source>
</evidence>
<dbReference type="EC" id="2.7.8.13" evidence="1"/>
<dbReference type="EMBL" id="CP000576">
    <property type="protein sequence ID" value="ABO18523.1"/>
    <property type="molecule type" value="Genomic_DNA"/>
</dbReference>
<dbReference type="RefSeq" id="WP_011863804.1">
    <property type="nucleotide sequence ID" value="NC_009091.1"/>
</dbReference>
<dbReference type="SMR" id="A3PFJ8"/>
<dbReference type="STRING" id="167546.P9301_19001"/>
<dbReference type="KEGG" id="pmg:P9301_19001"/>
<dbReference type="eggNOG" id="COG0472">
    <property type="taxonomic scope" value="Bacteria"/>
</dbReference>
<dbReference type="HOGENOM" id="CLU_023982_0_2_3"/>
<dbReference type="OrthoDB" id="9805475at2"/>
<dbReference type="UniPathway" id="UPA00219"/>
<dbReference type="Proteomes" id="UP000001430">
    <property type="component" value="Chromosome"/>
</dbReference>
<dbReference type="GO" id="GO:0005886">
    <property type="term" value="C:plasma membrane"/>
    <property type="evidence" value="ECO:0007669"/>
    <property type="project" value="UniProtKB-SubCell"/>
</dbReference>
<dbReference type="GO" id="GO:0046872">
    <property type="term" value="F:metal ion binding"/>
    <property type="evidence" value="ECO:0007669"/>
    <property type="project" value="UniProtKB-KW"/>
</dbReference>
<dbReference type="GO" id="GO:0008963">
    <property type="term" value="F:phospho-N-acetylmuramoyl-pentapeptide-transferase activity"/>
    <property type="evidence" value="ECO:0007669"/>
    <property type="project" value="UniProtKB-UniRule"/>
</dbReference>
<dbReference type="GO" id="GO:0051992">
    <property type="term" value="F:UDP-N-acetylmuramoyl-L-alanyl-D-glutamyl-meso-2,6-diaminopimelyl-D-alanyl-D-alanine:undecaprenyl-phosphate transferase activity"/>
    <property type="evidence" value="ECO:0007669"/>
    <property type="project" value="RHEA"/>
</dbReference>
<dbReference type="GO" id="GO:0051301">
    <property type="term" value="P:cell division"/>
    <property type="evidence" value="ECO:0007669"/>
    <property type="project" value="UniProtKB-KW"/>
</dbReference>
<dbReference type="GO" id="GO:0071555">
    <property type="term" value="P:cell wall organization"/>
    <property type="evidence" value="ECO:0007669"/>
    <property type="project" value="UniProtKB-KW"/>
</dbReference>
<dbReference type="GO" id="GO:0009252">
    <property type="term" value="P:peptidoglycan biosynthetic process"/>
    <property type="evidence" value="ECO:0007669"/>
    <property type="project" value="UniProtKB-UniRule"/>
</dbReference>
<dbReference type="GO" id="GO:0008360">
    <property type="term" value="P:regulation of cell shape"/>
    <property type="evidence" value="ECO:0007669"/>
    <property type="project" value="UniProtKB-KW"/>
</dbReference>
<dbReference type="CDD" id="cd06852">
    <property type="entry name" value="GT_MraY"/>
    <property type="match status" value="1"/>
</dbReference>
<dbReference type="HAMAP" id="MF_00038">
    <property type="entry name" value="MraY"/>
    <property type="match status" value="1"/>
</dbReference>
<dbReference type="InterPro" id="IPR000715">
    <property type="entry name" value="Glycosyl_transferase_4"/>
</dbReference>
<dbReference type="InterPro" id="IPR003524">
    <property type="entry name" value="PNAcMuramoyl-5peptid_Trfase"/>
</dbReference>
<dbReference type="InterPro" id="IPR018480">
    <property type="entry name" value="PNAcMuramoyl-5peptid_Trfase_CS"/>
</dbReference>
<dbReference type="NCBIfam" id="TIGR00445">
    <property type="entry name" value="mraY"/>
    <property type="match status" value="1"/>
</dbReference>
<dbReference type="PANTHER" id="PTHR22926">
    <property type="entry name" value="PHOSPHO-N-ACETYLMURAMOYL-PENTAPEPTIDE-TRANSFERASE"/>
    <property type="match status" value="1"/>
</dbReference>
<dbReference type="PANTHER" id="PTHR22926:SF5">
    <property type="entry name" value="PHOSPHO-N-ACETYLMURAMOYL-PENTAPEPTIDE-TRANSFERASE HOMOLOG"/>
    <property type="match status" value="1"/>
</dbReference>
<dbReference type="Pfam" id="PF00953">
    <property type="entry name" value="Glycos_transf_4"/>
    <property type="match status" value="1"/>
</dbReference>
<dbReference type="Pfam" id="PF10555">
    <property type="entry name" value="MraY_sig1"/>
    <property type="match status" value="1"/>
</dbReference>
<dbReference type="PROSITE" id="PS01347">
    <property type="entry name" value="MRAY_1"/>
    <property type="match status" value="1"/>
</dbReference>
<dbReference type="PROSITE" id="PS01348">
    <property type="entry name" value="MRAY_2"/>
    <property type="match status" value="1"/>
</dbReference>
<protein>
    <recommendedName>
        <fullName evidence="1">Phospho-N-acetylmuramoyl-pentapeptide-transferase</fullName>
        <ecNumber evidence="1">2.7.8.13</ecNumber>
    </recommendedName>
    <alternativeName>
        <fullName evidence="1">UDP-MurNAc-pentapeptide phosphotransferase</fullName>
    </alternativeName>
</protein>
<keyword id="KW-0131">Cell cycle</keyword>
<keyword id="KW-0132">Cell division</keyword>
<keyword id="KW-0997">Cell inner membrane</keyword>
<keyword id="KW-1003">Cell membrane</keyword>
<keyword id="KW-0133">Cell shape</keyword>
<keyword id="KW-0961">Cell wall biogenesis/degradation</keyword>
<keyword id="KW-0460">Magnesium</keyword>
<keyword id="KW-0472">Membrane</keyword>
<keyword id="KW-0479">Metal-binding</keyword>
<keyword id="KW-0573">Peptidoglycan synthesis</keyword>
<keyword id="KW-1185">Reference proteome</keyword>
<keyword id="KW-0808">Transferase</keyword>
<keyword id="KW-0812">Transmembrane</keyword>
<keyword id="KW-1133">Transmembrane helix</keyword>
<reference key="1">
    <citation type="journal article" date="2007" name="PLoS Genet.">
        <title>Patterns and implications of gene gain and loss in the evolution of Prochlorococcus.</title>
        <authorList>
            <person name="Kettler G.C."/>
            <person name="Martiny A.C."/>
            <person name="Huang K."/>
            <person name="Zucker J."/>
            <person name="Coleman M.L."/>
            <person name="Rodrigue S."/>
            <person name="Chen F."/>
            <person name="Lapidus A."/>
            <person name="Ferriera S."/>
            <person name="Johnson J."/>
            <person name="Steglich C."/>
            <person name="Church G.M."/>
            <person name="Richardson P."/>
            <person name="Chisholm S.W."/>
        </authorList>
    </citation>
    <scope>NUCLEOTIDE SEQUENCE [LARGE SCALE GENOMIC DNA]</scope>
    <source>
        <strain>MIT 9301</strain>
    </source>
</reference>
<name>MRAY_PROM0</name>
<sequence>MIGKIKKFNFKSLFILNTFALIVTSYLFNNFIFTGVYILFFFISIFITKNGLKIIKKFNFLQNIRDEGPTNHFKKSDTPTMGGIFMIIPFLILLLIITINLSSLKLILLLLTVFGFFITGFLDDYLSIKKRENTGLKTKEKFILQSVISIIFILLAYEKNLISPLITISDSWAINMNIFILPVAFLVLVGISNSVNLTDGLDGLAAGCSGIVFYGLGTEILLKGQQELFVFSILCFSMSGICLGFLKYNSYPAKIFMGDTGSLSIGAILGSIALLTNSIFTLSIFSGIFIIESLSVIIQVGFFKITKKLFHRGKRIFLMAPLHHHFELKGVKEEKIVENFWKINILLVILGIVLKINL</sequence>
<organism>
    <name type="scientific">Prochlorococcus marinus (strain MIT 9301)</name>
    <dbReference type="NCBI Taxonomy" id="167546"/>
    <lineage>
        <taxon>Bacteria</taxon>
        <taxon>Bacillati</taxon>
        <taxon>Cyanobacteriota</taxon>
        <taxon>Cyanophyceae</taxon>
        <taxon>Synechococcales</taxon>
        <taxon>Prochlorococcaceae</taxon>
        <taxon>Prochlorococcus</taxon>
    </lineage>
</organism>
<gene>
    <name evidence="1" type="primary">mraY</name>
    <name type="ordered locus">P9301_19001</name>
</gene>
<comment type="function">
    <text evidence="1">Catalyzes the initial step of the lipid cycle reactions in the biosynthesis of the cell wall peptidoglycan: transfers peptidoglycan precursor phospho-MurNAc-pentapeptide from UDP-MurNAc-pentapeptide onto the lipid carrier undecaprenyl phosphate, yielding undecaprenyl-pyrophosphoryl-MurNAc-pentapeptide, known as lipid I.</text>
</comment>
<comment type="catalytic activity">
    <reaction evidence="1">
        <text>UDP-N-acetyl-alpha-D-muramoyl-L-alanyl-gamma-D-glutamyl-meso-2,6-diaminopimeloyl-D-alanyl-D-alanine + di-trans,octa-cis-undecaprenyl phosphate = di-trans,octa-cis-undecaprenyl diphospho-N-acetyl-alpha-D-muramoyl-L-alanyl-D-glutamyl-meso-2,6-diaminopimeloyl-D-alanyl-D-alanine + UMP</text>
        <dbReference type="Rhea" id="RHEA:28386"/>
        <dbReference type="ChEBI" id="CHEBI:57865"/>
        <dbReference type="ChEBI" id="CHEBI:60392"/>
        <dbReference type="ChEBI" id="CHEBI:61386"/>
        <dbReference type="ChEBI" id="CHEBI:61387"/>
        <dbReference type="EC" id="2.7.8.13"/>
    </reaction>
</comment>
<comment type="cofactor">
    <cofactor evidence="1">
        <name>Mg(2+)</name>
        <dbReference type="ChEBI" id="CHEBI:18420"/>
    </cofactor>
</comment>
<comment type="pathway">
    <text evidence="1">Cell wall biogenesis; peptidoglycan biosynthesis.</text>
</comment>
<comment type="subcellular location">
    <subcellularLocation>
        <location evidence="1">Cell inner membrane</location>
        <topology evidence="1">Multi-pass membrane protein</topology>
    </subcellularLocation>
</comment>
<comment type="similarity">
    <text evidence="1">Belongs to the glycosyltransferase 4 family. MraY subfamily.</text>
</comment>
<feature type="chain" id="PRO_1000003029" description="Phospho-N-acetylmuramoyl-pentapeptide-transferase">
    <location>
        <begin position="1"/>
        <end position="358"/>
    </location>
</feature>
<feature type="transmembrane region" description="Helical" evidence="1">
    <location>
        <begin position="13"/>
        <end position="47"/>
    </location>
</feature>
<feature type="transmembrane region" description="Helical" evidence="1">
    <location>
        <begin position="81"/>
        <end position="101"/>
    </location>
</feature>
<feature type="transmembrane region" description="Helical" evidence="1">
    <location>
        <begin position="106"/>
        <end position="126"/>
    </location>
</feature>
<feature type="transmembrane region" description="Helical" evidence="1">
    <location>
        <begin position="148"/>
        <end position="168"/>
    </location>
</feature>
<feature type="transmembrane region" description="Helical" evidence="1">
    <location>
        <begin position="171"/>
        <end position="191"/>
    </location>
</feature>
<feature type="transmembrane region" description="Helical" evidence="1">
    <location>
        <begin position="201"/>
        <end position="221"/>
    </location>
</feature>
<feature type="transmembrane region" description="Helical" evidence="1">
    <location>
        <begin position="228"/>
        <end position="248"/>
    </location>
</feature>
<feature type="transmembrane region" description="Helical" evidence="1">
    <location>
        <begin position="255"/>
        <end position="275"/>
    </location>
</feature>
<feature type="transmembrane region" description="Helical" evidence="1">
    <location>
        <begin position="278"/>
        <end position="298"/>
    </location>
</feature>
<feature type="transmembrane region" description="Helical" evidence="1">
    <location>
        <begin position="336"/>
        <end position="356"/>
    </location>
</feature>
<proteinExistence type="inferred from homology"/>
<accession>A3PFJ8</accession>